<feature type="chain" id="PRO_1000097447" description="Thymidylate kinase">
    <location>
        <begin position="1"/>
        <end position="212"/>
    </location>
</feature>
<feature type="binding site" evidence="1">
    <location>
        <begin position="10"/>
        <end position="17"/>
    </location>
    <ligand>
        <name>ATP</name>
        <dbReference type="ChEBI" id="CHEBI:30616"/>
    </ligand>
</feature>
<keyword id="KW-0067">ATP-binding</keyword>
<keyword id="KW-0418">Kinase</keyword>
<keyword id="KW-0545">Nucleotide biosynthesis</keyword>
<keyword id="KW-0547">Nucleotide-binding</keyword>
<keyword id="KW-0808">Transferase</keyword>
<proteinExistence type="inferred from homology"/>
<evidence type="ECO:0000255" key="1">
    <source>
        <dbReference type="HAMAP-Rule" id="MF_00165"/>
    </source>
</evidence>
<gene>
    <name evidence="1" type="primary">tmk</name>
    <name type="ordered locus">YPTS_2554</name>
</gene>
<organism>
    <name type="scientific">Yersinia pseudotuberculosis serotype IB (strain PB1/+)</name>
    <dbReference type="NCBI Taxonomy" id="502801"/>
    <lineage>
        <taxon>Bacteria</taxon>
        <taxon>Pseudomonadati</taxon>
        <taxon>Pseudomonadota</taxon>
        <taxon>Gammaproteobacteria</taxon>
        <taxon>Enterobacterales</taxon>
        <taxon>Yersiniaceae</taxon>
        <taxon>Yersinia</taxon>
    </lineage>
</organism>
<reference key="1">
    <citation type="submission" date="2008-04" db="EMBL/GenBank/DDBJ databases">
        <title>Complete sequence of Yersinia pseudotuberculosis PB1/+.</title>
        <authorList>
            <person name="Copeland A."/>
            <person name="Lucas S."/>
            <person name="Lapidus A."/>
            <person name="Glavina del Rio T."/>
            <person name="Dalin E."/>
            <person name="Tice H."/>
            <person name="Bruce D."/>
            <person name="Goodwin L."/>
            <person name="Pitluck S."/>
            <person name="Munk A.C."/>
            <person name="Brettin T."/>
            <person name="Detter J.C."/>
            <person name="Han C."/>
            <person name="Tapia R."/>
            <person name="Schmutz J."/>
            <person name="Larimer F."/>
            <person name="Land M."/>
            <person name="Hauser L."/>
            <person name="Challacombe J.F."/>
            <person name="Green L."/>
            <person name="Lindler L.E."/>
            <person name="Nikolich M.P."/>
            <person name="Richardson P."/>
        </authorList>
    </citation>
    <scope>NUCLEOTIDE SEQUENCE [LARGE SCALE GENOMIC DNA]</scope>
    <source>
        <strain>PB1/+</strain>
    </source>
</reference>
<protein>
    <recommendedName>
        <fullName evidence="1">Thymidylate kinase</fullName>
        <ecNumber evidence="1">2.7.4.9</ecNumber>
    </recommendedName>
    <alternativeName>
        <fullName evidence="1">dTMP kinase</fullName>
    </alternativeName>
</protein>
<name>KTHY_YERPB</name>
<accession>B2K751</accession>
<dbReference type="EC" id="2.7.4.9" evidence="1"/>
<dbReference type="EMBL" id="CP001048">
    <property type="protein sequence ID" value="ACC89514.1"/>
    <property type="molecule type" value="Genomic_DNA"/>
</dbReference>
<dbReference type="RefSeq" id="WP_011192604.1">
    <property type="nucleotide sequence ID" value="NZ_CP009780.1"/>
</dbReference>
<dbReference type="SMR" id="B2K751"/>
<dbReference type="KEGG" id="ypb:YPTS_2554"/>
<dbReference type="PATRIC" id="fig|502801.10.peg.1965"/>
<dbReference type="GO" id="GO:0005829">
    <property type="term" value="C:cytosol"/>
    <property type="evidence" value="ECO:0007669"/>
    <property type="project" value="TreeGrafter"/>
</dbReference>
<dbReference type="GO" id="GO:0005524">
    <property type="term" value="F:ATP binding"/>
    <property type="evidence" value="ECO:0007669"/>
    <property type="project" value="UniProtKB-UniRule"/>
</dbReference>
<dbReference type="GO" id="GO:0004798">
    <property type="term" value="F:dTMP kinase activity"/>
    <property type="evidence" value="ECO:0007669"/>
    <property type="project" value="UniProtKB-UniRule"/>
</dbReference>
<dbReference type="GO" id="GO:0006233">
    <property type="term" value="P:dTDP biosynthetic process"/>
    <property type="evidence" value="ECO:0007669"/>
    <property type="project" value="InterPro"/>
</dbReference>
<dbReference type="GO" id="GO:0006235">
    <property type="term" value="P:dTTP biosynthetic process"/>
    <property type="evidence" value="ECO:0007669"/>
    <property type="project" value="UniProtKB-UniRule"/>
</dbReference>
<dbReference type="GO" id="GO:0006227">
    <property type="term" value="P:dUDP biosynthetic process"/>
    <property type="evidence" value="ECO:0007669"/>
    <property type="project" value="TreeGrafter"/>
</dbReference>
<dbReference type="CDD" id="cd01672">
    <property type="entry name" value="TMPK"/>
    <property type="match status" value="1"/>
</dbReference>
<dbReference type="FunFam" id="3.40.50.300:FF:000321">
    <property type="entry name" value="Thymidylate kinase"/>
    <property type="match status" value="1"/>
</dbReference>
<dbReference type="Gene3D" id="3.40.50.300">
    <property type="entry name" value="P-loop containing nucleotide triphosphate hydrolases"/>
    <property type="match status" value="1"/>
</dbReference>
<dbReference type="HAMAP" id="MF_00165">
    <property type="entry name" value="Thymidylate_kinase"/>
    <property type="match status" value="1"/>
</dbReference>
<dbReference type="InterPro" id="IPR027417">
    <property type="entry name" value="P-loop_NTPase"/>
</dbReference>
<dbReference type="InterPro" id="IPR039430">
    <property type="entry name" value="Thymidylate_kin-like_dom"/>
</dbReference>
<dbReference type="InterPro" id="IPR018095">
    <property type="entry name" value="Thymidylate_kin_CS"/>
</dbReference>
<dbReference type="InterPro" id="IPR018094">
    <property type="entry name" value="Thymidylate_kinase"/>
</dbReference>
<dbReference type="NCBIfam" id="TIGR00041">
    <property type="entry name" value="DTMP_kinase"/>
    <property type="match status" value="1"/>
</dbReference>
<dbReference type="PANTHER" id="PTHR10344">
    <property type="entry name" value="THYMIDYLATE KINASE"/>
    <property type="match status" value="1"/>
</dbReference>
<dbReference type="PANTHER" id="PTHR10344:SF4">
    <property type="entry name" value="UMP-CMP KINASE 2, MITOCHONDRIAL"/>
    <property type="match status" value="1"/>
</dbReference>
<dbReference type="Pfam" id="PF02223">
    <property type="entry name" value="Thymidylate_kin"/>
    <property type="match status" value="1"/>
</dbReference>
<dbReference type="SUPFAM" id="SSF52540">
    <property type="entry name" value="P-loop containing nucleoside triphosphate hydrolases"/>
    <property type="match status" value="1"/>
</dbReference>
<dbReference type="PROSITE" id="PS01331">
    <property type="entry name" value="THYMIDYLATE_KINASE"/>
    <property type="match status" value="1"/>
</dbReference>
<comment type="function">
    <text evidence="1">Phosphorylation of dTMP to form dTDP in both de novo and salvage pathways of dTTP synthesis.</text>
</comment>
<comment type="catalytic activity">
    <reaction evidence="1">
        <text>dTMP + ATP = dTDP + ADP</text>
        <dbReference type="Rhea" id="RHEA:13517"/>
        <dbReference type="ChEBI" id="CHEBI:30616"/>
        <dbReference type="ChEBI" id="CHEBI:58369"/>
        <dbReference type="ChEBI" id="CHEBI:63528"/>
        <dbReference type="ChEBI" id="CHEBI:456216"/>
        <dbReference type="EC" id="2.7.4.9"/>
    </reaction>
</comment>
<comment type="similarity">
    <text evidence="1">Belongs to the thymidylate kinase family.</text>
</comment>
<sequence>MNSKFIVIEGLEGAGKTTARDTVVAVLRAQGINDIVFTREPGGTPLAEKLRDLIKQGIDGEVLTDKAEVLMLYAARVQLVENVIKPALARGSWVVGDRHDLSSQAYQGGGRGIDSQLMASLRDTVLGEFRPDLTLYLDLPPAVGLARARARGELDRIEQESLAFFERTRARYLELAASDASIKTIDASQPIEQVSASISQALAQWLTNQELV</sequence>